<proteinExistence type="inferred from homology"/>
<keyword id="KW-0051">Antiviral defense</keyword>
<keyword id="KW-1185">Reference proteome</keyword>
<reference key="1">
    <citation type="journal article" date="1997" name="Nature">
        <title>The complete genome sequence of the hyperthermophilic, sulphate-reducing archaeon Archaeoglobus fulgidus.</title>
        <authorList>
            <person name="Klenk H.-P."/>
            <person name="Clayton R.A."/>
            <person name="Tomb J.-F."/>
            <person name="White O."/>
            <person name="Nelson K.E."/>
            <person name="Ketchum K.A."/>
            <person name="Dodson R.J."/>
            <person name="Gwinn M.L."/>
            <person name="Hickey E.K."/>
            <person name="Peterson J.D."/>
            <person name="Richardson D.L."/>
            <person name="Kerlavage A.R."/>
            <person name="Graham D.E."/>
            <person name="Kyrpides N.C."/>
            <person name="Fleischmann R.D."/>
            <person name="Quackenbush J."/>
            <person name="Lee N.H."/>
            <person name="Sutton G.G."/>
            <person name="Gill S.R."/>
            <person name="Kirkness E.F."/>
            <person name="Dougherty B.A."/>
            <person name="McKenney K."/>
            <person name="Adams M.D."/>
            <person name="Loftus B.J."/>
            <person name="Peterson S.N."/>
            <person name="Reich C.I."/>
            <person name="McNeil L.K."/>
            <person name="Badger J.H."/>
            <person name="Glodek A."/>
            <person name="Zhou L."/>
            <person name="Overbeek R."/>
            <person name="Gocayne J.D."/>
            <person name="Weidman J.F."/>
            <person name="McDonald L.A."/>
            <person name="Utterback T.R."/>
            <person name="Cotton M.D."/>
            <person name="Spriggs T."/>
            <person name="Artiach P."/>
            <person name="Kaine B.P."/>
            <person name="Sykes S.M."/>
            <person name="Sadow P.W."/>
            <person name="D'Andrea K.P."/>
            <person name="Bowman C."/>
            <person name="Fujii C."/>
            <person name="Garland S.A."/>
            <person name="Mason T.M."/>
            <person name="Olsen G.J."/>
            <person name="Fraser C.M."/>
            <person name="Smith H.O."/>
            <person name="Woese C.R."/>
            <person name="Venter J.C."/>
        </authorList>
    </citation>
    <scope>NUCLEOTIDE SEQUENCE [LARGE SCALE GENOMIC DNA]</scope>
    <source>
        <strain>ATCC 49558 / DSM 4304 / JCM 9628 / NBRC 100126 / VC-16</strain>
    </source>
</reference>
<name>CAS5_ARCFU</name>
<accession>O30169</accession>
<feature type="chain" id="PRO_0000127820" description="CRISPR-associated protein Cas5">
    <location>
        <begin position="1"/>
        <end position="228"/>
    </location>
</feature>
<comment type="function">
    <text evidence="1">CRISPR (clustered regularly interspaced short palindromic repeat) is an adaptive immune system that provides protection against mobile genetic elements (viruses, transposable elements and conjugative plasmids). CRISPR clusters contain spacers, sequences complementary to antecedent mobile elements, and target invading nucleic acids. CRISPR clusters are transcribed and processed into CRISPR RNA (crRNA) (By similarity).</text>
</comment>
<comment type="similarity">
    <text evidence="2">Belongs to the CRISPR-associated protein Cas5 family.</text>
</comment>
<gene>
    <name type="primary">cas5</name>
    <name type="ordered locus">AF_0067</name>
</gene>
<evidence type="ECO:0000250" key="1"/>
<evidence type="ECO:0000305" key="2"/>
<protein>
    <recommendedName>
        <fullName>CRISPR-associated protein Cas5</fullName>
    </recommendedName>
</protein>
<sequence>MQWVKLTLHFPSFFSYRIPDYSSQYALSVPLPSPSAIKLSLVATAIRTTGNVAEGERVFYAVRDADIRILPPEQIAINSVLIKRLKKKKNPTELETFEKTFGVREYVFFPDDVNLFIGCDDIDIAIKYFGMLRYLGSSDSMLYVKCIEKINEPPKSAIKAIADKEFAEAISKEPYIVYPVKDISKKAKFEQINPYSGKSGRNVFERKYYLIKARIKKGKKWKLLEIQC</sequence>
<organism>
    <name type="scientific">Archaeoglobus fulgidus (strain ATCC 49558 / DSM 4304 / JCM 9628 / NBRC 100126 / VC-16)</name>
    <dbReference type="NCBI Taxonomy" id="224325"/>
    <lineage>
        <taxon>Archaea</taxon>
        <taxon>Methanobacteriati</taxon>
        <taxon>Methanobacteriota</taxon>
        <taxon>Archaeoglobi</taxon>
        <taxon>Archaeoglobales</taxon>
        <taxon>Archaeoglobaceae</taxon>
        <taxon>Archaeoglobus</taxon>
    </lineage>
</organism>
<dbReference type="EMBL" id="AE000782">
    <property type="protein sequence ID" value="AAB91170.1"/>
    <property type="molecule type" value="Genomic_DNA"/>
</dbReference>
<dbReference type="PIR" id="C69258">
    <property type="entry name" value="C69258"/>
</dbReference>
<dbReference type="RefSeq" id="WP_010877581.1">
    <property type="nucleotide sequence ID" value="NC_000917.1"/>
</dbReference>
<dbReference type="SMR" id="O30169"/>
<dbReference type="STRING" id="224325.AF_0067"/>
<dbReference type="PaxDb" id="224325-AF_0067"/>
<dbReference type="EnsemblBacteria" id="AAB91170">
    <property type="protein sequence ID" value="AAB91170"/>
    <property type="gene ID" value="AF_0067"/>
</dbReference>
<dbReference type="GeneID" id="24793619"/>
<dbReference type="KEGG" id="afu:AF_0067"/>
<dbReference type="eggNOG" id="arCOG02672">
    <property type="taxonomic scope" value="Archaea"/>
</dbReference>
<dbReference type="HOGENOM" id="CLU_1232816_0_0_2"/>
<dbReference type="OrthoDB" id="92330at2157"/>
<dbReference type="Proteomes" id="UP000002199">
    <property type="component" value="Chromosome"/>
</dbReference>
<dbReference type="GO" id="GO:0051607">
    <property type="term" value="P:defense response to virus"/>
    <property type="evidence" value="ECO:0007669"/>
    <property type="project" value="UniProtKB-KW"/>
</dbReference>
<dbReference type="InterPro" id="IPR013422">
    <property type="entry name" value="CRISPR-assoc_prot_Cas5_N"/>
</dbReference>
<dbReference type="NCBIfam" id="TIGR02593">
    <property type="entry name" value="CRISPR_cas5"/>
    <property type="match status" value="1"/>
</dbReference>